<protein>
    <recommendedName>
        <fullName evidence="1">Phosphoribosylaminoimidazole-succinocarboxamide synthase</fullName>
        <ecNumber evidence="1">6.3.2.6</ecNumber>
    </recommendedName>
    <alternativeName>
        <fullName evidence="1">SAICAR synthetase</fullName>
    </alternativeName>
</protein>
<proteinExistence type="inferred from homology"/>
<comment type="catalytic activity">
    <reaction evidence="1">
        <text>5-amino-1-(5-phospho-D-ribosyl)imidazole-4-carboxylate + L-aspartate + ATP = (2S)-2-[5-amino-1-(5-phospho-beta-D-ribosyl)imidazole-4-carboxamido]succinate + ADP + phosphate + 2 H(+)</text>
        <dbReference type="Rhea" id="RHEA:22628"/>
        <dbReference type="ChEBI" id="CHEBI:15378"/>
        <dbReference type="ChEBI" id="CHEBI:29991"/>
        <dbReference type="ChEBI" id="CHEBI:30616"/>
        <dbReference type="ChEBI" id="CHEBI:43474"/>
        <dbReference type="ChEBI" id="CHEBI:58443"/>
        <dbReference type="ChEBI" id="CHEBI:77657"/>
        <dbReference type="ChEBI" id="CHEBI:456216"/>
        <dbReference type="EC" id="6.3.2.6"/>
    </reaction>
</comment>
<comment type="pathway">
    <text evidence="1">Purine metabolism; IMP biosynthesis via de novo pathway; 5-amino-1-(5-phospho-D-ribosyl)imidazole-4-carboxamide from 5-amino-1-(5-phospho-D-ribosyl)imidazole-4-carboxylate: step 1/2.</text>
</comment>
<comment type="similarity">
    <text evidence="1">Belongs to the SAICAR synthetase family.</text>
</comment>
<name>PUR7_STAAS</name>
<evidence type="ECO:0000255" key="1">
    <source>
        <dbReference type="HAMAP-Rule" id="MF_00137"/>
    </source>
</evidence>
<dbReference type="EC" id="6.3.2.6" evidence="1"/>
<dbReference type="EMBL" id="BX571857">
    <property type="protein sequence ID" value="CAG42776.1"/>
    <property type="molecule type" value="Genomic_DNA"/>
</dbReference>
<dbReference type="RefSeq" id="WP_000174053.1">
    <property type="nucleotide sequence ID" value="NC_002953.3"/>
</dbReference>
<dbReference type="SMR" id="Q6GAE7"/>
<dbReference type="KEGG" id="sas:SAS1002"/>
<dbReference type="HOGENOM" id="CLU_061495_2_0_9"/>
<dbReference type="UniPathway" id="UPA00074">
    <property type="reaction ID" value="UER00131"/>
</dbReference>
<dbReference type="GO" id="GO:0005524">
    <property type="term" value="F:ATP binding"/>
    <property type="evidence" value="ECO:0007669"/>
    <property type="project" value="UniProtKB-KW"/>
</dbReference>
<dbReference type="GO" id="GO:0004639">
    <property type="term" value="F:phosphoribosylaminoimidazolesuccinocarboxamide synthase activity"/>
    <property type="evidence" value="ECO:0007669"/>
    <property type="project" value="UniProtKB-UniRule"/>
</dbReference>
<dbReference type="GO" id="GO:0006189">
    <property type="term" value="P:'de novo' IMP biosynthetic process"/>
    <property type="evidence" value="ECO:0007669"/>
    <property type="project" value="UniProtKB-UniRule"/>
</dbReference>
<dbReference type="GO" id="GO:0009236">
    <property type="term" value="P:cobalamin biosynthetic process"/>
    <property type="evidence" value="ECO:0007669"/>
    <property type="project" value="InterPro"/>
</dbReference>
<dbReference type="CDD" id="cd01415">
    <property type="entry name" value="SAICAR_synt_PurC"/>
    <property type="match status" value="1"/>
</dbReference>
<dbReference type="FunFam" id="3.30.200.20:FF:000189">
    <property type="entry name" value="Phosphoribosylaminoimidazole-succinocarboxamide synthase"/>
    <property type="match status" value="1"/>
</dbReference>
<dbReference type="FunFam" id="3.30.470.20:FF:000006">
    <property type="entry name" value="Phosphoribosylaminoimidazole-succinocarboxamide synthase"/>
    <property type="match status" value="1"/>
</dbReference>
<dbReference type="Gene3D" id="3.30.470.20">
    <property type="entry name" value="ATP-grasp fold, B domain"/>
    <property type="match status" value="1"/>
</dbReference>
<dbReference type="Gene3D" id="3.30.200.20">
    <property type="entry name" value="Phosphorylase Kinase, domain 1"/>
    <property type="match status" value="1"/>
</dbReference>
<dbReference type="HAMAP" id="MF_00137">
    <property type="entry name" value="SAICAR_synth"/>
    <property type="match status" value="1"/>
</dbReference>
<dbReference type="InterPro" id="IPR028923">
    <property type="entry name" value="SAICAR_synt/ADE2_N"/>
</dbReference>
<dbReference type="InterPro" id="IPR033934">
    <property type="entry name" value="SAICAR_synt_PurC"/>
</dbReference>
<dbReference type="InterPro" id="IPR001636">
    <property type="entry name" value="SAICAR_synth"/>
</dbReference>
<dbReference type="InterPro" id="IPR050089">
    <property type="entry name" value="SAICAR_synthetase"/>
</dbReference>
<dbReference type="InterPro" id="IPR018236">
    <property type="entry name" value="SAICAR_synthetase_CS"/>
</dbReference>
<dbReference type="NCBIfam" id="TIGR00081">
    <property type="entry name" value="purC"/>
    <property type="match status" value="1"/>
</dbReference>
<dbReference type="PANTHER" id="PTHR43599">
    <property type="entry name" value="MULTIFUNCTIONAL PROTEIN ADE2"/>
    <property type="match status" value="1"/>
</dbReference>
<dbReference type="PANTHER" id="PTHR43599:SF3">
    <property type="entry name" value="SI:DKEY-6E2.2"/>
    <property type="match status" value="1"/>
</dbReference>
<dbReference type="Pfam" id="PF01259">
    <property type="entry name" value="SAICAR_synt"/>
    <property type="match status" value="1"/>
</dbReference>
<dbReference type="SUPFAM" id="SSF56104">
    <property type="entry name" value="SAICAR synthase-like"/>
    <property type="match status" value="1"/>
</dbReference>
<dbReference type="PROSITE" id="PS01057">
    <property type="entry name" value="SAICAR_SYNTHETASE_1"/>
    <property type="match status" value="1"/>
</dbReference>
<dbReference type="PROSITE" id="PS01058">
    <property type="entry name" value="SAICAR_SYNTHETASE_2"/>
    <property type="match status" value="1"/>
</dbReference>
<reference key="1">
    <citation type="journal article" date="2004" name="Proc. Natl. Acad. Sci. U.S.A.">
        <title>Complete genomes of two clinical Staphylococcus aureus strains: evidence for the rapid evolution of virulence and drug resistance.</title>
        <authorList>
            <person name="Holden M.T.G."/>
            <person name="Feil E.J."/>
            <person name="Lindsay J.A."/>
            <person name="Peacock S.J."/>
            <person name="Day N.P.J."/>
            <person name="Enright M.C."/>
            <person name="Foster T.J."/>
            <person name="Moore C.E."/>
            <person name="Hurst L."/>
            <person name="Atkin R."/>
            <person name="Barron A."/>
            <person name="Bason N."/>
            <person name="Bentley S.D."/>
            <person name="Chillingworth C."/>
            <person name="Chillingworth T."/>
            <person name="Churcher C."/>
            <person name="Clark L."/>
            <person name="Corton C."/>
            <person name="Cronin A."/>
            <person name="Doggett J."/>
            <person name="Dowd L."/>
            <person name="Feltwell T."/>
            <person name="Hance Z."/>
            <person name="Harris B."/>
            <person name="Hauser H."/>
            <person name="Holroyd S."/>
            <person name="Jagels K."/>
            <person name="James K.D."/>
            <person name="Lennard N."/>
            <person name="Line A."/>
            <person name="Mayes R."/>
            <person name="Moule S."/>
            <person name="Mungall K."/>
            <person name="Ormond D."/>
            <person name="Quail M.A."/>
            <person name="Rabbinowitsch E."/>
            <person name="Rutherford K.M."/>
            <person name="Sanders M."/>
            <person name="Sharp S."/>
            <person name="Simmonds M."/>
            <person name="Stevens K."/>
            <person name="Whitehead S."/>
            <person name="Barrell B.G."/>
            <person name="Spratt B.G."/>
            <person name="Parkhill J."/>
        </authorList>
    </citation>
    <scope>NUCLEOTIDE SEQUENCE [LARGE SCALE GENOMIC DNA]</scope>
    <source>
        <strain>MSSA476</strain>
    </source>
</reference>
<organism>
    <name type="scientific">Staphylococcus aureus (strain MSSA476)</name>
    <dbReference type="NCBI Taxonomy" id="282459"/>
    <lineage>
        <taxon>Bacteria</taxon>
        <taxon>Bacillati</taxon>
        <taxon>Bacillota</taxon>
        <taxon>Bacilli</taxon>
        <taxon>Bacillales</taxon>
        <taxon>Staphylococcaceae</taxon>
        <taxon>Staphylococcus</taxon>
    </lineage>
</organism>
<keyword id="KW-0067">ATP-binding</keyword>
<keyword id="KW-0436">Ligase</keyword>
<keyword id="KW-0547">Nucleotide-binding</keyword>
<keyword id="KW-0658">Purine biosynthesis</keyword>
<feature type="chain" id="PRO_0000100873" description="Phosphoribosylaminoimidazole-succinocarboxamide synthase">
    <location>
        <begin position="1"/>
        <end position="234"/>
    </location>
</feature>
<accession>Q6GAE7</accession>
<gene>
    <name evidence="1" type="primary">purC</name>
    <name type="ordered locus">SAS1002</name>
</gene>
<sequence>MTLLYEGKAKRIFSTNQENELRVEYKDEVTAGNGAKKDTMAGKGRLNNQITSIIFKYLQENGIESHFIKQLSETEQLVKPVKIIPLEVVVRNIASGSITKRLGFENGEVFREPLVEFFYKNDALNDPLITDDHVKLLNIASDEDIEILKSKALKINNVLKQLMDAMNLKLVDFKIEFGKTETGQILLADEISPDTCRIWDKATNANFDKDVYRNNTGSLIETYQIFLNKLEDLK</sequence>